<gene>
    <name type="primary">SQLE</name>
    <name type="synonym">ERG1</name>
</gene>
<dbReference type="EC" id="1.14.14.17" evidence="1 6"/>
<dbReference type="EMBL" id="D78130">
    <property type="protein sequence ID" value="BAA22372.1"/>
    <property type="molecule type" value="mRNA"/>
</dbReference>
<dbReference type="EMBL" id="AF098865">
    <property type="protein sequence ID" value="AAD10823.1"/>
    <property type="molecule type" value="mRNA"/>
</dbReference>
<dbReference type="EMBL" id="AK313384">
    <property type="protein sequence ID" value="BAG36182.1"/>
    <property type="molecule type" value="mRNA"/>
</dbReference>
<dbReference type="EMBL" id="BX647400">
    <property type="status" value="NOT_ANNOTATED_CDS"/>
    <property type="molecule type" value="mRNA"/>
</dbReference>
<dbReference type="EMBL" id="AC009908">
    <property type="status" value="NOT_ANNOTATED_CDS"/>
    <property type="molecule type" value="Genomic_DNA"/>
</dbReference>
<dbReference type="EMBL" id="CH471060">
    <property type="protein sequence ID" value="EAW92079.1"/>
    <property type="molecule type" value="Genomic_DNA"/>
</dbReference>
<dbReference type="EMBL" id="BC017033">
    <property type="protein sequence ID" value="AAH17033.1"/>
    <property type="molecule type" value="mRNA"/>
</dbReference>
<dbReference type="EMBL" id="FJ695197">
    <property type="status" value="NOT_ANNOTATED_CDS"/>
    <property type="molecule type" value="Genomic_DNA"/>
</dbReference>
<dbReference type="EMBL" id="D78129">
    <property type="protein sequence ID" value="BAA11209.1"/>
    <property type="molecule type" value="mRNA"/>
</dbReference>
<dbReference type="CCDS" id="CCDS47918.1"/>
<dbReference type="RefSeq" id="NP_003120.2">
    <property type="nucleotide sequence ID" value="NM_003129.4"/>
</dbReference>
<dbReference type="PDB" id="6C6N">
    <property type="method" value="X-ray"/>
    <property type="resolution" value="2.30 A"/>
    <property type="chains" value="A/B=118-574"/>
</dbReference>
<dbReference type="PDB" id="6C6P">
    <property type="method" value="X-ray"/>
    <property type="resolution" value="2.50 A"/>
    <property type="chains" value="A/B=118-574"/>
</dbReference>
<dbReference type="PDB" id="6C6R">
    <property type="method" value="X-ray"/>
    <property type="resolution" value="3.00 A"/>
    <property type="chains" value="A/B=118-574"/>
</dbReference>
<dbReference type="PDBsum" id="6C6N"/>
<dbReference type="PDBsum" id="6C6P"/>
<dbReference type="PDBsum" id="6C6R"/>
<dbReference type="SMR" id="Q14534"/>
<dbReference type="BioGRID" id="112591">
    <property type="interactions" value="51"/>
</dbReference>
<dbReference type="FunCoup" id="Q14534">
    <property type="interactions" value="814"/>
</dbReference>
<dbReference type="IntAct" id="Q14534">
    <property type="interactions" value="35"/>
</dbReference>
<dbReference type="MINT" id="Q14534"/>
<dbReference type="STRING" id="9606.ENSP00000265896"/>
<dbReference type="BindingDB" id="Q14534"/>
<dbReference type="ChEMBL" id="CHEMBL3592"/>
<dbReference type="DrugBank" id="DB01091">
    <property type="generic name" value="Butenafine"/>
</dbReference>
<dbReference type="DrugBank" id="DB08846">
    <property type="generic name" value="Ellagic acid"/>
</dbReference>
<dbReference type="DrugBank" id="DB12116">
    <property type="generic name" value="Epigallocatechin gallate"/>
</dbReference>
<dbReference type="DrugBank" id="DB00735">
    <property type="generic name" value="Naftifine"/>
</dbReference>
<dbReference type="DrugBank" id="DB00857">
    <property type="generic name" value="Terbinafine"/>
</dbReference>
<dbReference type="DrugBank" id="DB00525">
    <property type="generic name" value="Tolnaftate"/>
</dbReference>
<dbReference type="DrugCentral" id="Q14534"/>
<dbReference type="GuidetoPHARMACOLOGY" id="2433"/>
<dbReference type="SwissLipids" id="SLP:000001243"/>
<dbReference type="iPTMnet" id="Q14534"/>
<dbReference type="PhosphoSitePlus" id="Q14534"/>
<dbReference type="SwissPalm" id="Q14534"/>
<dbReference type="BioMuta" id="SQLE"/>
<dbReference type="DMDM" id="296439362"/>
<dbReference type="jPOST" id="Q14534"/>
<dbReference type="MassIVE" id="Q14534"/>
<dbReference type="PaxDb" id="9606-ENSP00000265896"/>
<dbReference type="PeptideAtlas" id="Q14534"/>
<dbReference type="ProteomicsDB" id="60034"/>
<dbReference type="Pumba" id="Q14534"/>
<dbReference type="Antibodypedia" id="27121">
    <property type="antibodies" value="162 antibodies from 27 providers"/>
</dbReference>
<dbReference type="DNASU" id="6713"/>
<dbReference type="Ensembl" id="ENST00000265896.10">
    <property type="protein sequence ID" value="ENSP00000265896.5"/>
    <property type="gene ID" value="ENSG00000104549.12"/>
</dbReference>
<dbReference type="GeneID" id="6713"/>
<dbReference type="KEGG" id="hsa:6713"/>
<dbReference type="MANE-Select" id="ENST00000265896.10">
    <property type="protein sequence ID" value="ENSP00000265896.5"/>
    <property type="RefSeq nucleotide sequence ID" value="NM_003129.4"/>
    <property type="RefSeq protein sequence ID" value="NP_003120.2"/>
</dbReference>
<dbReference type="UCSC" id="uc011liq.3">
    <property type="organism name" value="human"/>
</dbReference>
<dbReference type="AGR" id="HGNC:11279"/>
<dbReference type="CTD" id="6713"/>
<dbReference type="DisGeNET" id="6713"/>
<dbReference type="GeneCards" id="SQLE"/>
<dbReference type="HGNC" id="HGNC:11279">
    <property type="gene designation" value="SQLE"/>
</dbReference>
<dbReference type="HPA" id="ENSG00000104549">
    <property type="expression patterns" value="Low tissue specificity"/>
</dbReference>
<dbReference type="MIM" id="602019">
    <property type="type" value="gene"/>
</dbReference>
<dbReference type="neXtProt" id="NX_Q14534"/>
<dbReference type="OpenTargets" id="ENSG00000104549"/>
<dbReference type="PharmGKB" id="PA36108"/>
<dbReference type="VEuPathDB" id="HostDB:ENSG00000104549"/>
<dbReference type="eggNOG" id="KOG1298">
    <property type="taxonomic scope" value="Eukaryota"/>
</dbReference>
<dbReference type="GeneTree" id="ENSGT00390000011759"/>
<dbReference type="InParanoid" id="Q14534"/>
<dbReference type="OMA" id="AKRTFYW"/>
<dbReference type="OrthoDB" id="1678617at2759"/>
<dbReference type="PAN-GO" id="Q14534">
    <property type="GO annotations" value="4 GO annotations based on evolutionary models"/>
</dbReference>
<dbReference type="PhylomeDB" id="Q14534"/>
<dbReference type="TreeFam" id="TF331056"/>
<dbReference type="BioCyc" id="MetaCyc:HS02595-MONOMER"/>
<dbReference type="BRENDA" id="1.14.14.17">
    <property type="organism ID" value="2681"/>
</dbReference>
<dbReference type="PathwayCommons" id="Q14534"/>
<dbReference type="Reactome" id="R-HSA-191273">
    <property type="pathway name" value="Cholesterol biosynthesis"/>
</dbReference>
<dbReference type="Reactome" id="R-HSA-2426168">
    <property type="pathway name" value="Activation of gene expression by SREBF (SREBP)"/>
</dbReference>
<dbReference type="SABIO-RK" id="Q14534"/>
<dbReference type="SignaLink" id="Q14534"/>
<dbReference type="SIGNOR" id="Q14534"/>
<dbReference type="UniPathway" id="UPA00767">
    <property type="reaction ID" value="UER00752"/>
</dbReference>
<dbReference type="BioGRID-ORCS" id="6713">
    <property type="hits" value="61 hits in 1181 CRISPR screens"/>
</dbReference>
<dbReference type="ChiTaRS" id="SQLE">
    <property type="organism name" value="human"/>
</dbReference>
<dbReference type="GeneWiki" id="Squalene_monooxygenase"/>
<dbReference type="GenomeRNAi" id="6713"/>
<dbReference type="Pharos" id="Q14534">
    <property type="development level" value="Tchem"/>
</dbReference>
<dbReference type="PRO" id="PR:Q14534"/>
<dbReference type="Proteomes" id="UP000005640">
    <property type="component" value="Chromosome 8"/>
</dbReference>
<dbReference type="RNAct" id="Q14534">
    <property type="molecule type" value="protein"/>
</dbReference>
<dbReference type="Bgee" id="ENSG00000104549">
    <property type="expression patterns" value="Expressed in adrenal tissue and 203 other cell types or tissues"/>
</dbReference>
<dbReference type="ExpressionAtlas" id="Q14534">
    <property type="expression patterns" value="baseline and differential"/>
</dbReference>
<dbReference type="GO" id="GO:0005783">
    <property type="term" value="C:endoplasmic reticulum"/>
    <property type="evidence" value="ECO:0000318"/>
    <property type="project" value="GO_Central"/>
</dbReference>
<dbReference type="GO" id="GO:0005789">
    <property type="term" value="C:endoplasmic reticulum membrane"/>
    <property type="evidence" value="ECO:0000304"/>
    <property type="project" value="Reactome"/>
</dbReference>
<dbReference type="GO" id="GO:0043231">
    <property type="term" value="C:intracellular membrane-bounded organelle"/>
    <property type="evidence" value="ECO:0000314"/>
    <property type="project" value="UniProtKB"/>
</dbReference>
<dbReference type="GO" id="GO:0016020">
    <property type="term" value="C:membrane"/>
    <property type="evidence" value="ECO:0000314"/>
    <property type="project" value="UniProtKB"/>
</dbReference>
<dbReference type="GO" id="GO:0071949">
    <property type="term" value="F:FAD binding"/>
    <property type="evidence" value="ECO:0000314"/>
    <property type="project" value="UniProtKB"/>
</dbReference>
<dbReference type="GO" id="GO:0004506">
    <property type="term" value="F:squalene monooxygenase activity"/>
    <property type="evidence" value="ECO:0000314"/>
    <property type="project" value="UniProtKB"/>
</dbReference>
<dbReference type="GO" id="GO:0008203">
    <property type="term" value="P:cholesterol metabolic process"/>
    <property type="evidence" value="ECO:0000318"/>
    <property type="project" value="GO_Central"/>
</dbReference>
<dbReference type="GO" id="GO:0140042">
    <property type="term" value="P:lipid droplet formation"/>
    <property type="evidence" value="ECO:0000315"/>
    <property type="project" value="UniProtKB"/>
</dbReference>
<dbReference type="GO" id="GO:0042127">
    <property type="term" value="P:regulation of cell population proliferation"/>
    <property type="evidence" value="ECO:0000315"/>
    <property type="project" value="UniProtKB"/>
</dbReference>
<dbReference type="GO" id="GO:1904614">
    <property type="term" value="P:response to biphenyl"/>
    <property type="evidence" value="ECO:0007669"/>
    <property type="project" value="Ensembl"/>
</dbReference>
<dbReference type="GO" id="GO:0016126">
    <property type="term" value="P:sterol biosynthetic process"/>
    <property type="evidence" value="ECO:0000314"/>
    <property type="project" value="UniProtKB"/>
</dbReference>
<dbReference type="FunFam" id="3.50.50.60:FF:000104">
    <property type="entry name" value="Squalene monooxygenase"/>
    <property type="match status" value="1"/>
</dbReference>
<dbReference type="Gene3D" id="3.50.50.60">
    <property type="entry name" value="FAD/NAD(P)-binding domain"/>
    <property type="match status" value="1"/>
</dbReference>
<dbReference type="InterPro" id="IPR036188">
    <property type="entry name" value="FAD/NAD-bd_sf"/>
</dbReference>
<dbReference type="InterPro" id="IPR013698">
    <property type="entry name" value="Squalene_epoxidase"/>
</dbReference>
<dbReference type="InterPro" id="IPR040125">
    <property type="entry name" value="Squalene_monox"/>
</dbReference>
<dbReference type="PANTHER" id="PTHR10835">
    <property type="entry name" value="SQUALENE MONOOXYGENASE"/>
    <property type="match status" value="1"/>
</dbReference>
<dbReference type="PANTHER" id="PTHR10835:SF0">
    <property type="entry name" value="SQUALENE MONOOXYGENASE"/>
    <property type="match status" value="1"/>
</dbReference>
<dbReference type="Pfam" id="PF13450">
    <property type="entry name" value="NAD_binding_8"/>
    <property type="match status" value="1"/>
</dbReference>
<dbReference type="Pfam" id="PF08491">
    <property type="entry name" value="SE"/>
    <property type="match status" value="1"/>
</dbReference>
<dbReference type="PRINTS" id="PR00420">
    <property type="entry name" value="RNGMNOXGNASE"/>
</dbReference>
<dbReference type="SUPFAM" id="SSF51905">
    <property type="entry name" value="FAD/NAD(P)-binding domain"/>
    <property type="match status" value="1"/>
</dbReference>
<reference key="1">
    <citation type="journal article" date="1997" name="Genomics">
        <title>Localization of the squalene epoxidase gene (SQLE) to human chromosome region 8q24.1.</title>
        <authorList>
            <person name="Nagai M."/>
            <person name="Sakakibara J."/>
            <person name="Wakui K."/>
            <person name="Fukushima Y."/>
            <person name="Igarashi S."/>
            <person name="Tsuji S."/>
            <person name="Arakawa M."/>
            <person name="Ono T."/>
        </authorList>
    </citation>
    <scope>NUCLEOTIDE SEQUENCE [MRNA]</scope>
</reference>
<reference evidence="12" key="2">
    <citation type="journal article" date="2000" name="Arch. Biochem. Biophys.">
        <title>Cloning, heterologous expression, and enzymological characterization of human squalene monooxygenase.</title>
        <authorList>
            <person name="Laden B.P."/>
            <person name="Tang Y."/>
            <person name="Porter T.D."/>
        </authorList>
    </citation>
    <scope>NUCLEOTIDE SEQUENCE [MRNA]</scope>
    <scope>FUNCTION</scope>
    <scope>CATALYTIC ACTIVITY</scope>
    <scope>ACTIVITY REGULATION</scope>
    <scope>COFACTOR</scope>
    <scope>PATHWAY</scope>
    <source>
        <tissue evidence="12">Liver</tissue>
    </source>
</reference>
<reference key="3">
    <citation type="journal article" date="2004" name="Nat. Genet.">
        <title>Complete sequencing and characterization of 21,243 full-length human cDNAs.</title>
        <authorList>
            <person name="Ota T."/>
            <person name="Suzuki Y."/>
            <person name="Nishikawa T."/>
            <person name="Otsuki T."/>
            <person name="Sugiyama T."/>
            <person name="Irie R."/>
            <person name="Wakamatsu A."/>
            <person name="Hayashi K."/>
            <person name="Sato H."/>
            <person name="Nagai K."/>
            <person name="Kimura K."/>
            <person name="Makita H."/>
            <person name="Sekine M."/>
            <person name="Obayashi M."/>
            <person name="Nishi T."/>
            <person name="Shibahara T."/>
            <person name="Tanaka T."/>
            <person name="Ishii S."/>
            <person name="Yamamoto J."/>
            <person name="Saito K."/>
            <person name="Kawai Y."/>
            <person name="Isono Y."/>
            <person name="Nakamura Y."/>
            <person name="Nagahari K."/>
            <person name="Murakami K."/>
            <person name="Yasuda T."/>
            <person name="Iwayanagi T."/>
            <person name="Wagatsuma M."/>
            <person name="Shiratori A."/>
            <person name="Sudo H."/>
            <person name="Hosoiri T."/>
            <person name="Kaku Y."/>
            <person name="Kodaira H."/>
            <person name="Kondo H."/>
            <person name="Sugawara M."/>
            <person name="Takahashi M."/>
            <person name="Kanda K."/>
            <person name="Yokoi T."/>
            <person name="Furuya T."/>
            <person name="Kikkawa E."/>
            <person name="Omura Y."/>
            <person name="Abe K."/>
            <person name="Kamihara K."/>
            <person name="Katsuta N."/>
            <person name="Sato K."/>
            <person name="Tanikawa M."/>
            <person name="Yamazaki M."/>
            <person name="Ninomiya K."/>
            <person name="Ishibashi T."/>
            <person name="Yamashita H."/>
            <person name="Murakawa K."/>
            <person name="Fujimori K."/>
            <person name="Tanai H."/>
            <person name="Kimata M."/>
            <person name="Watanabe M."/>
            <person name="Hiraoka S."/>
            <person name="Chiba Y."/>
            <person name="Ishida S."/>
            <person name="Ono Y."/>
            <person name="Takiguchi S."/>
            <person name="Watanabe S."/>
            <person name="Yosida M."/>
            <person name="Hotuta T."/>
            <person name="Kusano J."/>
            <person name="Kanehori K."/>
            <person name="Takahashi-Fujii A."/>
            <person name="Hara H."/>
            <person name="Tanase T.-O."/>
            <person name="Nomura Y."/>
            <person name="Togiya S."/>
            <person name="Komai F."/>
            <person name="Hara R."/>
            <person name="Takeuchi K."/>
            <person name="Arita M."/>
            <person name="Imose N."/>
            <person name="Musashino K."/>
            <person name="Yuuki H."/>
            <person name="Oshima A."/>
            <person name="Sasaki N."/>
            <person name="Aotsuka S."/>
            <person name="Yoshikawa Y."/>
            <person name="Matsunawa H."/>
            <person name="Ichihara T."/>
            <person name="Shiohata N."/>
            <person name="Sano S."/>
            <person name="Moriya S."/>
            <person name="Momiyama H."/>
            <person name="Satoh N."/>
            <person name="Takami S."/>
            <person name="Terashima Y."/>
            <person name="Suzuki O."/>
            <person name="Nakagawa S."/>
            <person name="Senoh A."/>
            <person name="Mizoguchi H."/>
            <person name="Goto Y."/>
            <person name="Shimizu F."/>
            <person name="Wakebe H."/>
            <person name="Hishigaki H."/>
            <person name="Watanabe T."/>
            <person name="Sugiyama A."/>
            <person name="Takemoto M."/>
            <person name="Kawakami B."/>
            <person name="Yamazaki M."/>
            <person name="Watanabe K."/>
            <person name="Kumagai A."/>
            <person name="Itakura S."/>
            <person name="Fukuzumi Y."/>
            <person name="Fujimori Y."/>
            <person name="Komiyama M."/>
            <person name="Tashiro H."/>
            <person name="Tanigami A."/>
            <person name="Fujiwara T."/>
            <person name="Ono T."/>
            <person name="Yamada K."/>
            <person name="Fujii Y."/>
            <person name="Ozaki K."/>
            <person name="Hirao M."/>
            <person name="Ohmori Y."/>
            <person name="Kawabata A."/>
            <person name="Hikiji T."/>
            <person name="Kobatake N."/>
            <person name="Inagaki H."/>
            <person name="Ikema Y."/>
            <person name="Okamoto S."/>
            <person name="Okitani R."/>
            <person name="Kawakami T."/>
            <person name="Noguchi S."/>
            <person name="Itoh T."/>
            <person name="Shigeta K."/>
            <person name="Senba T."/>
            <person name="Matsumura K."/>
            <person name="Nakajima Y."/>
            <person name="Mizuno T."/>
            <person name="Morinaga M."/>
            <person name="Sasaki M."/>
            <person name="Togashi T."/>
            <person name="Oyama M."/>
            <person name="Hata H."/>
            <person name="Watanabe M."/>
            <person name="Komatsu T."/>
            <person name="Mizushima-Sugano J."/>
            <person name="Satoh T."/>
            <person name="Shirai Y."/>
            <person name="Takahashi Y."/>
            <person name="Nakagawa K."/>
            <person name="Okumura K."/>
            <person name="Nagase T."/>
            <person name="Nomura N."/>
            <person name="Kikuchi H."/>
            <person name="Masuho Y."/>
            <person name="Yamashita R."/>
            <person name="Nakai K."/>
            <person name="Yada T."/>
            <person name="Nakamura Y."/>
            <person name="Ohara O."/>
            <person name="Isogai T."/>
            <person name="Sugano S."/>
        </authorList>
    </citation>
    <scope>NUCLEOTIDE SEQUENCE [LARGE SCALE MRNA]</scope>
    <source>
        <tissue evidence="14">Ovary</tissue>
    </source>
</reference>
<reference key="4">
    <citation type="journal article" date="2007" name="BMC Genomics">
        <title>The full-ORF clone resource of the German cDNA consortium.</title>
        <authorList>
            <person name="Bechtel S."/>
            <person name="Rosenfelder H."/>
            <person name="Duda A."/>
            <person name="Schmidt C.P."/>
            <person name="Ernst U."/>
            <person name="Wellenreuther R."/>
            <person name="Mehrle A."/>
            <person name="Schuster C."/>
            <person name="Bahr A."/>
            <person name="Bloecker H."/>
            <person name="Heubner D."/>
            <person name="Hoerlein A."/>
            <person name="Michel G."/>
            <person name="Wedler H."/>
            <person name="Koehrer K."/>
            <person name="Ottenwaelder B."/>
            <person name="Poustka A."/>
            <person name="Wiemann S."/>
            <person name="Schupp I."/>
        </authorList>
    </citation>
    <scope>NUCLEOTIDE SEQUENCE [LARGE SCALE MRNA]</scope>
    <source>
        <tissue>Colon endothelium</tissue>
    </source>
</reference>
<reference key="5">
    <citation type="journal article" date="2006" name="Nature">
        <title>DNA sequence and analysis of human chromosome 8.</title>
        <authorList>
            <person name="Nusbaum C."/>
            <person name="Mikkelsen T.S."/>
            <person name="Zody M.C."/>
            <person name="Asakawa S."/>
            <person name="Taudien S."/>
            <person name="Garber M."/>
            <person name="Kodira C.D."/>
            <person name="Schueler M.G."/>
            <person name="Shimizu A."/>
            <person name="Whittaker C.A."/>
            <person name="Chang J.L."/>
            <person name="Cuomo C.A."/>
            <person name="Dewar K."/>
            <person name="FitzGerald M.G."/>
            <person name="Yang X."/>
            <person name="Allen N.R."/>
            <person name="Anderson S."/>
            <person name="Asakawa T."/>
            <person name="Blechschmidt K."/>
            <person name="Bloom T."/>
            <person name="Borowsky M.L."/>
            <person name="Butler J."/>
            <person name="Cook A."/>
            <person name="Corum B."/>
            <person name="DeArellano K."/>
            <person name="DeCaprio D."/>
            <person name="Dooley K.T."/>
            <person name="Dorris L. III"/>
            <person name="Engels R."/>
            <person name="Gloeckner G."/>
            <person name="Hafez N."/>
            <person name="Hagopian D.S."/>
            <person name="Hall J.L."/>
            <person name="Ishikawa S.K."/>
            <person name="Jaffe D.B."/>
            <person name="Kamat A."/>
            <person name="Kudoh J."/>
            <person name="Lehmann R."/>
            <person name="Lokitsang T."/>
            <person name="Macdonald P."/>
            <person name="Major J.E."/>
            <person name="Matthews C.D."/>
            <person name="Mauceli E."/>
            <person name="Menzel U."/>
            <person name="Mihalev A.H."/>
            <person name="Minoshima S."/>
            <person name="Murayama Y."/>
            <person name="Naylor J.W."/>
            <person name="Nicol R."/>
            <person name="Nguyen C."/>
            <person name="O'Leary S.B."/>
            <person name="O'Neill K."/>
            <person name="Parker S.C.J."/>
            <person name="Polley A."/>
            <person name="Raymond C.K."/>
            <person name="Reichwald K."/>
            <person name="Rodriguez J."/>
            <person name="Sasaki T."/>
            <person name="Schilhabel M."/>
            <person name="Siddiqui R."/>
            <person name="Smith C.L."/>
            <person name="Sneddon T.P."/>
            <person name="Talamas J.A."/>
            <person name="Tenzin P."/>
            <person name="Topham K."/>
            <person name="Venkataraman V."/>
            <person name="Wen G."/>
            <person name="Yamazaki S."/>
            <person name="Young S.K."/>
            <person name="Zeng Q."/>
            <person name="Zimmer A.R."/>
            <person name="Rosenthal A."/>
            <person name="Birren B.W."/>
            <person name="Platzer M."/>
            <person name="Shimizu N."/>
            <person name="Lander E.S."/>
        </authorList>
    </citation>
    <scope>NUCLEOTIDE SEQUENCE [LARGE SCALE GENOMIC DNA]</scope>
</reference>
<reference key="6">
    <citation type="submission" date="2005-07" db="EMBL/GenBank/DDBJ databases">
        <authorList>
            <person name="Mural R.J."/>
            <person name="Istrail S."/>
            <person name="Sutton G.G."/>
            <person name="Florea L."/>
            <person name="Halpern A.L."/>
            <person name="Mobarry C.M."/>
            <person name="Lippert R."/>
            <person name="Walenz B."/>
            <person name="Shatkay H."/>
            <person name="Dew I."/>
            <person name="Miller J.R."/>
            <person name="Flanigan M.J."/>
            <person name="Edwards N.J."/>
            <person name="Bolanos R."/>
            <person name="Fasulo D."/>
            <person name="Halldorsson B.V."/>
            <person name="Hannenhalli S."/>
            <person name="Turner R."/>
            <person name="Yooseph S."/>
            <person name="Lu F."/>
            <person name="Nusskern D.R."/>
            <person name="Shue B.C."/>
            <person name="Zheng X.H."/>
            <person name="Zhong F."/>
            <person name="Delcher A.L."/>
            <person name="Huson D.H."/>
            <person name="Kravitz S.A."/>
            <person name="Mouchard L."/>
            <person name="Reinert K."/>
            <person name="Remington K.A."/>
            <person name="Clark A.G."/>
            <person name="Waterman M.S."/>
            <person name="Eichler E.E."/>
            <person name="Adams M.D."/>
            <person name="Hunkapiller M.W."/>
            <person name="Myers E.W."/>
            <person name="Venter J.C."/>
        </authorList>
    </citation>
    <scope>NUCLEOTIDE SEQUENCE [LARGE SCALE GENOMIC DNA]</scope>
</reference>
<reference key="7">
    <citation type="journal article" date="2004" name="Genome Res.">
        <title>The status, quality, and expansion of the NIH full-length cDNA project: the Mammalian Gene Collection (MGC).</title>
        <authorList>
            <consortium name="The MGC Project Team"/>
        </authorList>
    </citation>
    <scope>NUCLEOTIDE SEQUENCE [LARGE SCALE MRNA]</scope>
    <source>
        <tissue evidence="13">Colon</tissue>
    </source>
</reference>
<reference key="8">
    <citation type="journal article" date="1996" name="J. Biol. Chem.">
        <title>Transcriptional regulation of squalene epoxidase by sterols and inhibitors in HeLa cells.</title>
        <authorList>
            <person name="Nakamura Y."/>
            <person name="Sakakibara J."/>
            <person name="Izumi T."/>
            <person name="Shibata A."/>
            <person name="Ono T."/>
        </authorList>
    </citation>
    <scope>NUCLEOTIDE SEQUENCE [MRNA] OF 187-535</scope>
    <source>
        <tissue>Liver</tissue>
    </source>
</reference>
<reference key="9">
    <citation type="journal article" date="2011" name="BMC Syst. Biol.">
        <title>Initial characterization of the human central proteome.</title>
        <authorList>
            <person name="Burkard T.R."/>
            <person name="Planyavsky M."/>
            <person name="Kaupe I."/>
            <person name="Breitwieser F.P."/>
            <person name="Buerckstuemmer T."/>
            <person name="Bennett K.L."/>
            <person name="Superti-Furga G."/>
            <person name="Colinge J."/>
        </authorList>
    </citation>
    <scope>IDENTIFICATION BY MASS SPECTROMETRY [LARGE SCALE ANALYSIS]</scope>
</reference>
<reference key="10">
    <citation type="journal article" date="2014" name="Mol. Cell. Biol.">
        <title>The E3 ubiquitin ligase MARCH6 degrades squalene monooxygenase and affects 3-hydroxy-3-methyl-glutaryl coenzyme A reductase and the cholesterol synthesis pathway.</title>
        <authorList>
            <person name="Zelcer N."/>
            <person name="Sharpe L.J."/>
            <person name="Loregger A."/>
            <person name="Kristiana I."/>
            <person name="Cook E.C."/>
            <person name="Phan L."/>
            <person name="Stevenson J."/>
            <person name="Brown A.J."/>
        </authorList>
    </citation>
    <scope>DOMAIN</scope>
    <scope>INTERACTION WITH MARCHF6</scope>
    <scope>UBIQUITINATION</scope>
    <scope>PATHWAY</scope>
</reference>
<reference key="11">
    <citation type="journal article" date="2015" name="J. Biol. Chem.">
        <title>The Regulatory Domain of Squalene Monooxygenase Contains a Re-entrant Loop and Senses Cholesterol via a Conformational Change.</title>
        <authorList>
            <person name="Howe V."/>
            <person name="Chua N.K."/>
            <person name="Stevenson J."/>
            <person name="Brown A.J."/>
        </authorList>
    </citation>
    <scope>SUBCELLULAR LOCATION</scope>
    <scope>TOPOLOGY</scope>
    <scope>DOMAIN</scope>
</reference>
<reference key="12">
    <citation type="journal article" date="2015" name="Proteomics">
        <title>N-terminome analysis of the human mitochondrial proteome.</title>
        <authorList>
            <person name="Vaca Jacome A.S."/>
            <person name="Rabilloud T."/>
            <person name="Schaeffer-Reiss C."/>
            <person name="Rompais M."/>
            <person name="Ayoub D."/>
            <person name="Lane L."/>
            <person name="Bairoch A."/>
            <person name="Van Dorsselaer A."/>
            <person name="Carapito C."/>
        </authorList>
    </citation>
    <scope>IDENTIFICATION BY MASS SPECTROMETRY [LARGE SCALE ANALYSIS]</scope>
</reference>
<reference key="13">
    <citation type="journal article" date="2017" name="J. Biol. Chem.">
        <title>A conserved degron containing an amphipathic helix regulates the cholesterol-mediated turnover of human squalene monooxygenase, a rate-limiting enzyme in cholesterol synthesis.</title>
        <authorList>
            <person name="Chua N.K."/>
            <person name="Howe V."/>
            <person name="Jatana N."/>
            <person name="Thukral L."/>
            <person name="Brown A.J."/>
        </authorList>
    </citation>
    <scope>DOMAIN</scope>
    <scope>SUBCELLULAR LOCATION</scope>
    <scope>TOPOLOGY</scope>
    <scope>MUTAGENESIS OF PHE-35; SER-37; 62-GLN--LEU-73; LEU-65 AND ILE-69</scope>
</reference>
<reference key="14">
    <citation type="journal article" date="2018" name="Oncogene">
        <title>The cancer-associated microprotein CASIMO1 controls cell proliferation and interacts with squalene epoxidase modulating lipid droplet formation.</title>
        <authorList>
            <person name="Polycarpou-Schwarz M."/>
            <person name="Gross M."/>
            <person name="Mestdagh P."/>
            <person name="Schott J."/>
            <person name="Grund S.E."/>
            <person name="Hildenbrand C."/>
            <person name="Rom J."/>
            <person name="Aulmann S."/>
            <person name="Sinn H.P."/>
            <person name="Vandesompele J."/>
            <person name="Diederichs S."/>
        </authorList>
    </citation>
    <scope>INTERACTION WITH SMIM22</scope>
</reference>
<reference evidence="15 16 17" key="15">
    <citation type="journal article" date="2019" name="Nat. Commun.">
        <title>Structure and inhibition mechanism of the catalytic domain of human squalene epoxidase.</title>
        <authorList>
            <person name="Padyana A.K."/>
            <person name="Gross S."/>
            <person name="Jin L."/>
            <person name="Cianchetta G."/>
            <person name="Narayanaswamy R."/>
            <person name="Wang F."/>
            <person name="Wang R."/>
            <person name="Fang C."/>
            <person name="Lv X."/>
            <person name="Biller S.A."/>
            <person name="Dang L."/>
            <person name="Mahoney C.E."/>
            <person name="Nagaraja N."/>
            <person name="Pirman D."/>
            <person name="Sui Z."/>
            <person name="Popovici-Muller J."/>
            <person name="Smolen G.A."/>
        </authorList>
    </citation>
    <scope>X-RAY CRYSTALLOGRAPHY (2.30 ANGSTROMS) OF 118-574 IN COMPLEXES WITH FAD AND SYNTHETIC INHIBITORS</scope>
    <scope>FUNCTION</scope>
    <scope>CATALYTIC ACTIVITY</scope>
    <scope>BIOPHYSICOCHEMICAL PROPERTIES</scope>
    <scope>COFACTOR</scope>
    <scope>PATHWAY</scope>
    <scope>TISSUE SPECIFICITY</scope>
    <scope>SUBCELLULAR LOCATION</scope>
    <scope>ACTIVITY REGULATION</scope>
    <scope>MUTAGENESIS OF TYR-195</scope>
    <scope>DOMAIN</scope>
</reference>
<comment type="function">
    <text evidence="1 6">Catalyzes the stereospecific oxidation of squalene to (S)-2,3-epoxysqualene, and is considered to be a rate-limiting enzyme in steroid biosynthesis.</text>
</comment>
<comment type="catalytic activity">
    <reaction evidence="1 6">
        <text>squalene + reduced [NADPH--hemoprotein reductase] + O2 = (S)-2,3-epoxysqualene + oxidized [NADPH--hemoprotein reductase] + H2O + H(+)</text>
        <dbReference type="Rhea" id="RHEA:25282"/>
        <dbReference type="Rhea" id="RHEA-COMP:11964"/>
        <dbReference type="Rhea" id="RHEA-COMP:11965"/>
        <dbReference type="ChEBI" id="CHEBI:15377"/>
        <dbReference type="ChEBI" id="CHEBI:15378"/>
        <dbReference type="ChEBI" id="CHEBI:15379"/>
        <dbReference type="ChEBI" id="CHEBI:15440"/>
        <dbReference type="ChEBI" id="CHEBI:15441"/>
        <dbReference type="ChEBI" id="CHEBI:57618"/>
        <dbReference type="ChEBI" id="CHEBI:58210"/>
        <dbReference type="EC" id="1.14.14.17"/>
    </reaction>
</comment>
<comment type="cofactor">
    <cofactor evidence="1 6">
        <name>FAD</name>
        <dbReference type="ChEBI" id="CHEBI:57692"/>
    </cofactor>
</comment>
<comment type="activity regulation">
    <text evidence="1 6">Inhibited by NB-598 ((E)N-ethyl-N-(6,6-dimethyl-2-hepten-4-ynyl)-3-[(3,3'-bi-thiophen-5-yl)methoxy]benzene-methanamine). Contrary to fungal enzymes, the mammalian enzyme is only slightly inhibited by terbinafine (PubMed:30626872). Inhibited by tellurite, tellurium dioxide, selenite, and selenium dioxide (PubMed:10666321).</text>
</comment>
<comment type="biophysicochemical properties">
    <kinetics>
        <KM evidence="6">2.9 uM for squalene</KM>
        <KM evidence="6">9.6 uM for FAD</KM>
    </kinetics>
</comment>
<comment type="pathway">
    <text evidence="2 9 11">Terpene metabolism; lanosterol biosynthesis; lanosterol from farnesyl diphosphate: step 2/3.</text>
</comment>
<comment type="subunit">
    <text evidence="2 5">Interacts (via N-terminal domain) with MARCHF6. Interacts with SMIM22; this interaction modulates lipid droplet formation (PubMed:29765154).</text>
</comment>
<comment type="interaction">
    <interactant intactId="EBI-3905171">
        <id>Q14534</id>
    </interactant>
    <interactant intactId="EBI-6942903">
        <id>Q96BA8</id>
        <label>CREB3L1</label>
    </interactant>
    <organismsDiffer>false</organismsDiffer>
    <experiments>3</experiments>
</comment>
<comment type="interaction">
    <interactant intactId="EBI-3905171">
        <id>Q14534</id>
    </interactant>
    <interactant intactId="EBI-7545592">
        <id>Q9H6H4</id>
        <label>REEP4</label>
    </interactant>
    <organismsDiffer>false</organismsDiffer>
    <experiments>3</experiments>
</comment>
<comment type="interaction">
    <interactant intactId="EBI-3905171">
        <id>Q14534</id>
    </interactant>
    <interactant intactId="EBI-8638294">
        <id>Q9NUH8</id>
        <label>TMEM14B</label>
    </interactant>
    <organismsDiffer>false</organismsDiffer>
    <experiments>3</experiments>
</comment>
<comment type="subcellular location">
    <subcellularLocation>
        <location evidence="3 4 6">Microsome membrane</location>
        <topology evidence="3 4">Peripheral membrane protein</topology>
    </subcellularLocation>
    <subcellularLocation>
        <location evidence="10">Endoplasmic reticulum membrane</location>
        <topology evidence="3 4">Peripheral membrane protein</topology>
    </subcellularLocation>
</comment>
<comment type="tissue specificity">
    <text evidence="6">Detected in liver (at protein level).</text>
</comment>
<comment type="domain">
    <text evidence="6">The C-terminal hydrophobic region contains two helices that mediate interaction with membranes. Contrary to predictions, this region does not contain transmembrane helices.</text>
</comment>
<comment type="domain">
    <text evidence="2 3 4">The N-terminal region mediates interaction with MARCHF6, leading to SQLE ubiquitination and proteasomal degradation when cholosterol levels are high (PubMed:24449766, PubMed:26434806, PubMed:28972164). The first part of the N-terminal region contains a hydrophobic region that inserts into the membrane; contrary to predictions, there are no transmembrane helices (PubMed:26434806). The second part contains a region that can form an amphipathic region that associates with membranes. This region is ejected from the membrane by high cholesterol levels and becomes disordered in an aqueous environment. This is critical for cholesterol-dependent proteasomal degradation. Additional parts of the N-terminal region are predicted to be disordered and contribute to flagging the protein for proteasomal degradation already under basal conditions (PubMed:28972164).</text>
</comment>
<comment type="PTM">
    <text evidence="2">Ubiquitinated by MARCHF6 in response to high cholesterol levels in intracellular membranes, leading to proteasomal degradation.</text>
</comment>
<comment type="similarity">
    <text evidence="8">Belongs to the squalene monooxygenase family.</text>
</comment>
<name>ERG1_HUMAN</name>
<sequence>MWTFLGIATFTYFYKKFGDFITLANREVLLCVLVFLSLGLVLSYRCRHRNGGLLGRQQSGSQFALFSDILSGLPFIGFFWAKSPPESENKEQLEARRRRKGTNISETSLIGTAACTSTSSQNDPEVIIVGAGVLGSALAAVLSRDGRKVTVIERDLKEPDRIVGEFLQPGGYHVLKDLGLGDTVEGLDAQVVNGYMIHDQESKSEVQIPYPLSENNQVQSGRAFHHGRFIMSLRKAAMAEPNAKFIEGVVLQLLEEDDVVMGVQYKDKETGDIKELHAPLTVVADGLFSKFRKSLVSNKVSVSSHFVGFLMKNAPQFKANHAELILANPSPVLIYQISSSETRVLVDIRGEMPRNLREYMVEKIYPQIPDHLKEPFLEATDNSHLRSMPASFLPPSSVKKRGVLLLGDAYNMRHPLTGGGMTVAFKDIKLWRKLLKGIPDLYDDAAIFEAKKSFYWARKTSHSFVVNILAQALYELFSATDDSLHQLRKACFLYFKLGGECVAGPVGLLSVLSPNPLVLIGHFFAVAIYAVYFCFKSEPWITKPRALLSSGAVLYKACSVIFPLIYSEMKYMVH</sequence>
<evidence type="ECO:0000269" key="1">
    <source>
    </source>
</evidence>
<evidence type="ECO:0000269" key="2">
    <source>
    </source>
</evidence>
<evidence type="ECO:0000269" key="3">
    <source>
    </source>
</evidence>
<evidence type="ECO:0000269" key="4">
    <source>
    </source>
</evidence>
<evidence type="ECO:0000269" key="5">
    <source>
    </source>
</evidence>
<evidence type="ECO:0000269" key="6">
    <source>
    </source>
</evidence>
<evidence type="ECO:0000303" key="7">
    <source>
    </source>
</evidence>
<evidence type="ECO:0000305" key="8"/>
<evidence type="ECO:0000305" key="9">
    <source>
    </source>
</evidence>
<evidence type="ECO:0000305" key="10">
    <source>
    </source>
</evidence>
<evidence type="ECO:0000305" key="11">
    <source>
    </source>
</evidence>
<evidence type="ECO:0000312" key="12">
    <source>
        <dbReference type="EMBL" id="AAD10823.1"/>
    </source>
</evidence>
<evidence type="ECO:0000312" key="13">
    <source>
        <dbReference type="EMBL" id="AAH17033.1"/>
    </source>
</evidence>
<evidence type="ECO:0000312" key="14">
    <source>
        <dbReference type="EMBL" id="BAG36182.1"/>
    </source>
</evidence>
<evidence type="ECO:0007744" key="15">
    <source>
        <dbReference type="PDB" id="6C6N"/>
    </source>
</evidence>
<evidence type="ECO:0007744" key="16">
    <source>
        <dbReference type="PDB" id="6C6P"/>
    </source>
</evidence>
<evidence type="ECO:0007744" key="17">
    <source>
        <dbReference type="PDB" id="6C6R"/>
    </source>
</evidence>
<evidence type="ECO:0007829" key="18">
    <source>
        <dbReference type="PDB" id="6C6N"/>
    </source>
</evidence>
<evidence type="ECO:0007829" key="19">
    <source>
        <dbReference type="PDB" id="6C6R"/>
    </source>
</evidence>
<organism>
    <name type="scientific">Homo sapiens</name>
    <name type="common">Human</name>
    <dbReference type="NCBI Taxonomy" id="9606"/>
    <lineage>
        <taxon>Eukaryota</taxon>
        <taxon>Metazoa</taxon>
        <taxon>Chordata</taxon>
        <taxon>Craniata</taxon>
        <taxon>Vertebrata</taxon>
        <taxon>Euteleostomi</taxon>
        <taxon>Mammalia</taxon>
        <taxon>Eutheria</taxon>
        <taxon>Euarchontoglires</taxon>
        <taxon>Primates</taxon>
        <taxon>Haplorrhini</taxon>
        <taxon>Catarrhini</taxon>
        <taxon>Hominidae</taxon>
        <taxon>Homo</taxon>
    </lineage>
</organism>
<accession>Q14534</accession>
<accession>Q9UEK6</accession>
<accession>Q9UNR6</accession>
<protein>
    <recommendedName>
        <fullName>Squalene monooxygenase</fullName>
        <ecNumber evidence="1 6">1.14.14.17</ecNumber>
    </recommendedName>
    <alternativeName>
        <fullName evidence="7">Squalene epoxidase</fullName>
        <shortName>SE</shortName>
    </alternativeName>
</protein>
<feature type="chain" id="PRO_0000209838" description="Squalene monooxygenase">
    <location>
        <begin position="1"/>
        <end position="574"/>
    </location>
</feature>
<feature type="topological domain" description="Cytoplasmic" evidence="10">
    <location>
        <begin position="1"/>
        <end position="20"/>
    </location>
</feature>
<feature type="intramembrane region" evidence="10">
    <location>
        <begin position="21"/>
        <end position="41"/>
    </location>
</feature>
<feature type="topological domain" description="Cytoplasmic" evidence="8">
    <location>
        <begin position="42"/>
        <end position="574"/>
    </location>
</feature>
<feature type="region of interest" description="Interaction with MARCHF6" evidence="2">
    <location>
        <begin position="1"/>
        <end position="100"/>
    </location>
</feature>
<feature type="region of interest" description="Required for degradation in response to high membrane cholesterol levels" evidence="4">
    <location>
        <begin position="62"/>
        <end position="73"/>
    </location>
</feature>
<feature type="region of interest" description="Sufficient for enzyme activity" evidence="1 6">
    <location>
        <begin position="118"/>
        <end position="574"/>
    </location>
</feature>
<feature type="region of interest" description="Hydrophobic; mediates interaction with membranes" evidence="6">
    <location>
        <begin position="516"/>
        <end position="574"/>
    </location>
</feature>
<feature type="binding site" evidence="6 15">
    <location>
        <begin position="133"/>
        <end position="134"/>
    </location>
    <ligand>
        <name>FAD</name>
        <dbReference type="ChEBI" id="CHEBI:57692"/>
    </ligand>
</feature>
<feature type="binding site" evidence="6 15">
    <location>
        <begin position="153"/>
        <end position="154"/>
    </location>
    <ligand>
        <name>FAD</name>
        <dbReference type="ChEBI" id="CHEBI:57692"/>
    </ligand>
</feature>
<feature type="binding site" evidence="6 15">
    <location>
        <position position="161"/>
    </location>
    <ligand>
        <name>FAD</name>
        <dbReference type="ChEBI" id="CHEBI:57692"/>
    </ligand>
</feature>
<feature type="binding site" evidence="6 15">
    <location>
        <position position="166"/>
    </location>
    <ligand>
        <name>FAD</name>
        <dbReference type="ChEBI" id="CHEBI:57692"/>
    </ligand>
</feature>
<feature type="binding site" evidence="6 15">
    <location>
        <position position="234"/>
    </location>
    <ligand>
        <name>FAD</name>
        <dbReference type="ChEBI" id="CHEBI:57692"/>
    </ligand>
</feature>
<feature type="binding site" evidence="6 15">
    <location>
        <position position="250"/>
    </location>
    <ligand>
        <name>FAD</name>
        <dbReference type="ChEBI" id="CHEBI:57692"/>
    </ligand>
</feature>
<feature type="binding site" evidence="6 15">
    <location>
        <position position="408"/>
    </location>
    <ligand>
        <name>FAD</name>
        <dbReference type="ChEBI" id="CHEBI:57692"/>
    </ligand>
</feature>
<feature type="binding site" evidence="6 15">
    <location>
        <position position="421"/>
    </location>
    <ligand>
        <name>FAD</name>
        <dbReference type="ChEBI" id="CHEBI:57692"/>
    </ligand>
</feature>
<feature type="site" description="Important for enzyme activity" evidence="6">
    <location>
        <position position="195"/>
    </location>
</feature>
<feature type="mutagenesis site" description="Increased expression levels and decreased degradation in response to high membrane cholesterol levels; when associated with A-37; A-65 and A-69." evidence="4">
    <original>F</original>
    <variation>A</variation>
    <location>
        <position position="35"/>
    </location>
</feature>
<feature type="mutagenesis site" description="Increased expression levels and decreased degradation in response to high membrane cholesterol levels; when associated with A-35; A-65 and A-69." evidence="4">
    <original>S</original>
    <variation>A</variation>
    <location>
        <position position="37"/>
    </location>
</feature>
<feature type="mutagenesis site" description="Abolishes degradation in response to high membrane cholesterol levels." evidence="4">
    <location>
        <begin position="62"/>
        <end position="73"/>
    </location>
</feature>
<feature type="mutagenesis site" description="Increased expression levels and decreased degradation in response to high membrane cholesterol levels; when associated with A-35; A-37 and A-69." evidence="4">
    <original>L</original>
    <variation>A</variation>
    <location>
        <position position="65"/>
    </location>
</feature>
<feature type="mutagenesis site" description="Increased expression levels and decreased degradation in response to high membrane cholesterol levels; when associated with A-35; A-37 and A-65." evidence="4">
    <original>I</original>
    <variation>A</variation>
    <location>
        <position position="69"/>
    </location>
</feature>
<feature type="mutagenesis site" description="Loss of enzyme activity." evidence="6">
    <original>Y</original>
    <variation>A</variation>
    <variation>F</variation>
    <location>
        <position position="195"/>
    </location>
</feature>
<feature type="sequence conflict" description="In Ref. 3; BX647400." evidence="8" ref="3">
    <original>S</original>
    <variation>F</variation>
    <location>
        <position position="43"/>
    </location>
</feature>
<feature type="sequence conflict" description="In Ref. 1; BAA22372." evidence="8" ref="1">
    <original>Q</original>
    <variation>R</variation>
    <location>
        <position position="58"/>
    </location>
</feature>
<feature type="sequence conflict" description="In Ref. 1; BAA22372." evidence="8" ref="1">
    <original>E</original>
    <variation>G</variation>
    <location>
        <position position="94"/>
    </location>
</feature>
<feature type="sequence conflict" description="In Ref. 1; BAA22372." evidence="8" ref="1">
    <original>A</original>
    <variation>V</variation>
    <location>
        <position position="139"/>
    </location>
</feature>
<feature type="sequence conflict" description="In Ref. 8; BAA11209." evidence="8" ref="8">
    <original>E</original>
    <variation>G</variation>
    <location>
        <position position="247"/>
    </location>
</feature>
<feature type="sequence conflict" description="In Ref. 3; BX647400." evidence="8" ref="3">
    <original>I</original>
    <variation>T</variation>
    <location>
        <position position="334"/>
    </location>
</feature>
<feature type="sequence conflict" description="In Ref. 1; BAA22372." evidence="8" ref="1">
    <original>Q</original>
    <variation>R</variation>
    <location>
        <position position="336"/>
    </location>
</feature>
<feature type="sequence conflict" description="In Ref. 3; BX647400." evidence="8" ref="3">
    <original>AT</original>
    <variation>VA</variation>
    <location>
        <begin position="379"/>
        <end position="380"/>
    </location>
</feature>
<feature type="sequence conflict" description="In Ref. 1; BAA22372." evidence="8" ref="1">
    <original>P</original>
    <variation>L</variation>
    <location>
        <position position="389"/>
    </location>
</feature>
<feature type="sequence conflict" description="In Ref. 1; BAA22372." evidence="8" ref="1">
    <original>K</original>
    <variation>N</variation>
    <location>
        <position position="451"/>
    </location>
</feature>
<feature type="sequence conflict" description="In Ref. 1; BAA22372." evidence="8" ref="1">
    <original>V</original>
    <variation>A</variation>
    <location>
        <position position="518"/>
    </location>
</feature>
<feature type="sequence conflict" description="In Ref. 1; BAA22372." evidence="8" ref="1">
    <original>G</original>
    <variation>S</variation>
    <location>
        <position position="551"/>
    </location>
</feature>
<feature type="strand" evidence="18">
    <location>
        <begin position="125"/>
        <end position="129"/>
    </location>
</feature>
<feature type="helix" evidence="18">
    <location>
        <begin position="133"/>
        <end position="144"/>
    </location>
</feature>
<feature type="strand" evidence="18">
    <location>
        <begin position="149"/>
        <end position="154"/>
    </location>
</feature>
<feature type="strand" evidence="18">
    <location>
        <begin position="162"/>
        <end position="164"/>
    </location>
</feature>
<feature type="helix" evidence="18">
    <location>
        <begin position="169"/>
        <end position="177"/>
    </location>
</feature>
<feature type="helix" evidence="18">
    <location>
        <begin position="181"/>
        <end position="184"/>
    </location>
</feature>
<feature type="strand" evidence="18">
    <location>
        <begin position="190"/>
        <end position="192"/>
    </location>
</feature>
<feature type="strand" evidence="18">
    <location>
        <begin position="194"/>
        <end position="199"/>
    </location>
</feature>
<feature type="turn" evidence="18">
    <location>
        <begin position="200"/>
        <end position="203"/>
    </location>
</feature>
<feature type="strand" evidence="18">
    <location>
        <begin position="204"/>
        <end position="209"/>
    </location>
</feature>
<feature type="strand" evidence="18">
    <location>
        <begin position="221"/>
        <end position="223"/>
    </location>
</feature>
<feature type="helix" evidence="18">
    <location>
        <begin position="226"/>
        <end position="238"/>
    </location>
</feature>
<feature type="strand" evidence="18">
    <location>
        <begin position="243"/>
        <end position="267"/>
    </location>
</feature>
<feature type="turn" evidence="18">
    <location>
        <begin position="268"/>
        <end position="270"/>
    </location>
</feature>
<feature type="strand" evidence="18">
    <location>
        <begin position="273"/>
        <end position="277"/>
    </location>
</feature>
<feature type="strand" evidence="18">
    <location>
        <begin position="279"/>
        <end position="283"/>
    </location>
</feature>
<feature type="helix" evidence="19">
    <location>
        <begin position="286"/>
        <end position="288"/>
    </location>
</feature>
<feature type="helix" evidence="18">
    <location>
        <begin position="292"/>
        <end position="295"/>
    </location>
</feature>
<feature type="strand" evidence="18">
    <location>
        <begin position="301"/>
        <end position="313"/>
    </location>
</feature>
<feature type="strand" evidence="18">
    <location>
        <begin position="321"/>
        <end position="326"/>
    </location>
</feature>
<feature type="strand" evidence="18">
    <location>
        <begin position="328"/>
        <end position="330"/>
    </location>
</feature>
<feature type="strand" evidence="18">
    <location>
        <begin position="332"/>
        <end position="336"/>
    </location>
</feature>
<feature type="strand" evidence="18">
    <location>
        <begin position="338"/>
        <end position="348"/>
    </location>
</feature>
<feature type="helix" evidence="18">
    <location>
        <begin position="356"/>
        <end position="362"/>
    </location>
</feature>
<feature type="helix" evidence="18">
    <location>
        <begin position="365"/>
        <end position="367"/>
    </location>
</feature>
<feature type="helix" evidence="18">
    <location>
        <begin position="370"/>
        <end position="372"/>
    </location>
</feature>
<feature type="helix" evidence="18">
    <location>
        <begin position="373"/>
        <end position="382"/>
    </location>
</feature>
<feature type="strand" evidence="18">
    <location>
        <begin position="386"/>
        <end position="393"/>
    </location>
</feature>
<feature type="strand" evidence="18">
    <location>
        <begin position="403"/>
        <end position="405"/>
    </location>
</feature>
<feature type="helix" evidence="18">
    <location>
        <begin position="407"/>
        <end position="409"/>
    </location>
</feature>
<feature type="helix" evidence="18">
    <location>
        <begin position="415"/>
        <end position="417"/>
    </location>
</feature>
<feature type="helix" evidence="18">
    <location>
        <begin position="420"/>
        <end position="436"/>
    </location>
</feature>
<feature type="helix" evidence="18">
    <location>
        <begin position="444"/>
        <end position="459"/>
    </location>
</feature>
<feature type="helix" evidence="18">
    <location>
        <begin position="462"/>
        <end position="477"/>
    </location>
</feature>
<feature type="helix" evidence="18">
    <location>
        <begin position="482"/>
        <end position="496"/>
    </location>
</feature>
<feature type="helix" evidence="18">
    <location>
        <begin position="500"/>
        <end position="509"/>
    </location>
</feature>
<feature type="helix" evidence="18">
    <location>
        <begin position="516"/>
        <end position="537"/>
    </location>
</feature>
<feature type="helix" evidence="18">
    <location>
        <begin position="540"/>
        <end position="544"/>
    </location>
</feature>
<feature type="helix" evidence="18">
    <location>
        <begin position="545"/>
        <end position="566"/>
    </location>
</feature>
<proteinExistence type="evidence at protein level"/>
<keyword id="KW-0002">3D-structure</keyword>
<keyword id="KW-0256">Endoplasmic reticulum</keyword>
<keyword id="KW-0274">FAD</keyword>
<keyword id="KW-0285">Flavoprotein</keyword>
<keyword id="KW-0443">Lipid metabolism</keyword>
<keyword id="KW-0472">Membrane</keyword>
<keyword id="KW-0492">Microsome</keyword>
<keyword id="KW-0560">Oxidoreductase</keyword>
<keyword id="KW-1267">Proteomics identification</keyword>
<keyword id="KW-1185">Reference proteome</keyword>
<keyword id="KW-0832">Ubl conjugation</keyword>